<organism>
    <name type="scientific">Neisseria gonorrhoeae</name>
    <dbReference type="NCBI Taxonomy" id="485"/>
    <lineage>
        <taxon>Bacteria</taxon>
        <taxon>Pseudomonadati</taxon>
        <taxon>Pseudomonadota</taxon>
        <taxon>Betaproteobacteria</taxon>
        <taxon>Neisseriales</taxon>
        <taxon>Neisseriaceae</taxon>
        <taxon>Neisseria</taxon>
    </lineage>
</organism>
<reference key="1">
    <citation type="journal article" date="1992" name="J. Bacteriol.">
        <title>Sequence analysis and complementation studies of the argJ gene encoding ornithine acetyltransferase from Neisseria gonorrhoeae.</title>
        <authorList>
            <person name="Martin P.R."/>
            <person name="Mulks M.H."/>
        </authorList>
    </citation>
    <scope>NUCLEOTIDE SEQUENCE [GENOMIC DNA]</scope>
    <source>
        <strain>CDC 50</strain>
    </source>
</reference>
<reference key="2">
    <citation type="journal article" date="1992" name="Infect. Immun.">
        <title>Molecular characterization of the argJ mutation in Neisseria gonorrhoeae strains with requirements for arginine, hypoxanthine, and uracil.</title>
        <authorList>
            <person name="Martin P.R."/>
            <person name="Mulks M.H."/>
        </authorList>
    </citation>
    <scope>NUCLEOTIDE SEQUENCE [GENOMIC DNA]</scope>
    <source>
        <strain>NRL 30465</strain>
    </source>
</reference>
<gene>
    <name evidence="1" type="primary">argJ</name>
</gene>
<dbReference type="EC" id="2.3.1.35" evidence="1"/>
<dbReference type="EC" id="2.3.1.1" evidence="1"/>
<dbReference type="EMBL" id="M65216">
    <property type="protein sequence ID" value="AAA25447.1"/>
    <property type="molecule type" value="Genomic_DNA"/>
</dbReference>
<dbReference type="EMBL" id="S85363">
    <property type="protein sequence ID" value="AAB21605.2"/>
    <property type="molecule type" value="Genomic_DNA"/>
</dbReference>
<dbReference type="PIR" id="A43850">
    <property type="entry name" value="A43850"/>
</dbReference>
<dbReference type="SMR" id="P38434"/>
<dbReference type="MEROPS" id="T05.001"/>
<dbReference type="UniPathway" id="UPA00068">
    <property type="reaction ID" value="UER00106"/>
</dbReference>
<dbReference type="UniPathway" id="UPA00068">
    <property type="reaction ID" value="UER00111"/>
</dbReference>
<dbReference type="GO" id="GO:0005737">
    <property type="term" value="C:cytoplasm"/>
    <property type="evidence" value="ECO:0007669"/>
    <property type="project" value="UniProtKB-SubCell"/>
</dbReference>
<dbReference type="GO" id="GO:0004358">
    <property type="term" value="F:glutamate N-acetyltransferase activity"/>
    <property type="evidence" value="ECO:0007669"/>
    <property type="project" value="UniProtKB-UniRule"/>
</dbReference>
<dbReference type="GO" id="GO:0004042">
    <property type="term" value="F:L-glutamate N-acetyltransferase activity"/>
    <property type="evidence" value="ECO:0007669"/>
    <property type="project" value="UniProtKB-UniRule"/>
</dbReference>
<dbReference type="GO" id="GO:0006526">
    <property type="term" value="P:L-arginine biosynthetic process"/>
    <property type="evidence" value="ECO:0007669"/>
    <property type="project" value="UniProtKB-UniRule"/>
</dbReference>
<dbReference type="GO" id="GO:0006592">
    <property type="term" value="P:ornithine biosynthetic process"/>
    <property type="evidence" value="ECO:0007669"/>
    <property type="project" value="TreeGrafter"/>
</dbReference>
<dbReference type="CDD" id="cd02152">
    <property type="entry name" value="OAT"/>
    <property type="match status" value="1"/>
</dbReference>
<dbReference type="FunFam" id="3.10.20.340:FF:000001">
    <property type="entry name" value="Arginine biosynthesis bifunctional protein ArgJ, chloroplastic"/>
    <property type="match status" value="1"/>
</dbReference>
<dbReference type="FunFam" id="3.60.70.12:FF:000001">
    <property type="entry name" value="Arginine biosynthesis bifunctional protein ArgJ, chloroplastic"/>
    <property type="match status" value="1"/>
</dbReference>
<dbReference type="Gene3D" id="3.10.20.340">
    <property type="entry name" value="ArgJ beta chain, C-terminal domain"/>
    <property type="match status" value="1"/>
</dbReference>
<dbReference type="Gene3D" id="3.60.70.12">
    <property type="entry name" value="L-amino peptidase D-ALA esterase/amidase"/>
    <property type="match status" value="1"/>
</dbReference>
<dbReference type="HAMAP" id="MF_01106">
    <property type="entry name" value="ArgJ"/>
    <property type="match status" value="1"/>
</dbReference>
<dbReference type="InterPro" id="IPR002813">
    <property type="entry name" value="Arg_biosynth_ArgJ"/>
</dbReference>
<dbReference type="InterPro" id="IPR016117">
    <property type="entry name" value="ArgJ-like_dom_sf"/>
</dbReference>
<dbReference type="InterPro" id="IPR042195">
    <property type="entry name" value="ArgJ_beta_C"/>
</dbReference>
<dbReference type="NCBIfam" id="TIGR00120">
    <property type="entry name" value="ArgJ"/>
    <property type="match status" value="1"/>
</dbReference>
<dbReference type="NCBIfam" id="NF003802">
    <property type="entry name" value="PRK05388.1"/>
    <property type="match status" value="1"/>
</dbReference>
<dbReference type="PANTHER" id="PTHR23100">
    <property type="entry name" value="ARGININE BIOSYNTHESIS BIFUNCTIONAL PROTEIN ARGJ"/>
    <property type="match status" value="1"/>
</dbReference>
<dbReference type="PANTHER" id="PTHR23100:SF0">
    <property type="entry name" value="ARGININE BIOSYNTHESIS BIFUNCTIONAL PROTEIN ARGJ, MITOCHONDRIAL"/>
    <property type="match status" value="1"/>
</dbReference>
<dbReference type="Pfam" id="PF01960">
    <property type="entry name" value="ArgJ"/>
    <property type="match status" value="1"/>
</dbReference>
<dbReference type="SUPFAM" id="SSF56266">
    <property type="entry name" value="DmpA/ArgJ-like"/>
    <property type="match status" value="1"/>
</dbReference>
<feature type="chain" id="PRO_0000002197" description="Arginine biosynthesis bifunctional protein ArgJ alpha chain" evidence="1">
    <location>
        <begin position="1"/>
        <end position="189"/>
    </location>
</feature>
<feature type="chain" id="PRO_0000002198" description="Arginine biosynthesis bifunctional protein ArgJ beta chain" evidence="1">
    <location>
        <begin position="190"/>
        <end position="406"/>
    </location>
</feature>
<feature type="active site" description="Nucleophile" evidence="1">
    <location>
        <position position="190"/>
    </location>
</feature>
<feature type="binding site" evidence="1">
    <location>
        <position position="152"/>
    </location>
    <ligand>
        <name>substrate</name>
    </ligand>
</feature>
<feature type="binding site" evidence="1">
    <location>
        <position position="179"/>
    </location>
    <ligand>
        <name>substrate</name>
    </ligand>
</feature>
<feature type="binding site" evidence="1">
    <location>
        <position position="190"/>
    </location>
    <ligand>
        <name>substrate</name>
    </ligand>
</feature>
<feature type="binding site" evidence="1">
    <location>
        <position position="277"/>
    </location>
    <ligand>
        <name>substrate</name>
    </ligand>
</feature>
<feature type="binding site" evidence="1">
    <location>
        <position position="401"/>
    </location>
    <ligand>
        <name>substrate</name>
    </ligand>
</feature>
<feature type="binding site" evidence="1">
    <location>
        <position position="406"/>
    </location>
    <ligand>
        <name>substrate</name>
    </ligand>
</feature>
<feature type="site" description="Involved in the stabilization of negative charge on the oxyanion by the formation of the oxyanion hole" evidence="1">
    <location>
        <position position="119"/>
    </location>
</feature>
<feature type="site" description="Involved in the stabilization of negative charge on the oxyanion by the formation of the oxyanion hole" evidence="1">
    <location>
        <position position="120"/>
    </location>
</feature>
<feature type="site" description="Cleavage; by autolysis" evidence="1">
    <location>
        <begin position="189"/>
        <end position="190"/>
    </location>
</feature>
<feature type="sequence conflict" description="In Ref. 2; AAB21605." evidence="2" ref="2">
    <original>G</original>
    <variation>A</variation>
    <location>
        <position position="120"/>
    </location>
</feature>
<accession>P38434</accession>
<accession>Q53567</accession>
<sequence length="406" mass="42866">MAVNLTEKTAEQLPDIDGIALYTAQAGVKKPGHTDLTLIAVAAGSTVGAVFTTNRFCAAPVHIAKSHLFDEDGVRALVINTGNANAGTGAQGRIDALAVCAAAARQIGCKPNQVMPFSTGVILEPLPADKIIAALPKMQPAFWNEAARAIMTTDTVPKAASREGKVGDQHTVRATGIAKGSGMIHPNMATMLGFIATDAKVSQPVLQLMTQEIADETFNTITVDGDTSTNDSFVIIATGKNSQSEIDNIADPRYAQLKELLCSLALELAQAIVRDGEGATKFITVRVENAKTCDEARQAAYAAARSPLVKTAFFASDPNLGKRLAAIGYADVADLDTDLVEMYLDDILVAEHGGRAASYTEAQGQAVMSKDEITVRIKLHRGQAAATVYTCDLSHGYVSINADYRS</sequence>
<proteinExistence type="inferred from homology"/>
<keyword id="KW-0012">Acyltransferase</keyword>
<keyword id="KW-0028">Amino-acid biosynthesis</keyword>
<keyword id="KW-0055">Arginine biosynthesis</keyword>
<keyword id="KW-0068">Autocatalytic cleavage</keyword>
<keyword id="KW-0963">Cytoplasm</keyword>
<keyword id="KW-0511">Multifunctional enzyme</keyword>
<keyword id="KW-0808">Transferase</keyword>
<evidence type="ECO:0000255" key="1">
    <source>
        <dbReference type="HAMAP-Rule" id="MF_01106"/>
    </source>
</evidence>
<evidence type="ECO:0000305" key="2"/>
<name>ARGJ_NEIGO</name>
<protein>
    <recommendedName>
        <fullName evidence="1">Arginine biosynthesis bifunctional protein ArgJ</fullName>
    </recommendedName>
    <domain>
        <recommendedName>
            <fullName evidence="1">Glutamate N-acetyltransferase</fullName>
            <ecNumber evidence="1">2.3.1.35</ecNumber>
        </recommendedName>
        <alternativeName>
            <fullName evidence="1">Ornithine acetyltransferase</fullName>
            <shortName evidence="1">OATase</shortName>
        </alternativeName>
        <alternativeName>
            <fullName evidence="1">Ornithine transacetylase</fullName>
        </alternativeName>
    </domain>
    <domain>
        <recommendedName>
            <fullName evidence="1">Amino-acid acetyltransferase</fullName>
            <ecNumber evidence="1">2.3.1.1</ecNumber>
        </recommendedName>
        <alternativeName>
            <fullName evidence="1">N-acetylglutamate synthase</fullName>
            <shortName evidence="1">AGSase</shortName>
        </alternativeName>
    </domain>
    <component>
        <recommendedName>
            <fullName evidence="1">Arginine biosynthesis bifunctional protein ArgJ alpha chain</fullName>
        </recommendedName>
    </component>
    <component>
        <recommendedName>
            <fullName evidence="1">Arginine biosynthesis bifunctional protein ArgJ beta chain</fullName>
        </recommendedName>
    </component>
</protein>
<comment type="function">
    <text evidence="1">Catalyzes two activities which are involved in the cyclic version of arginine biosynthesis: the synthesis of N-acetylglutamate from glutamate and acetyl-CoA as the acetyl donor, and of ornithine by transacetylation between N(2)-acetylornithine and glutamate.</text>
</comment>
<comment type="catalytic activity">
    <reaction evidence="1">
        <text>N(2)-acetyl-L-ornithine + L-glutamate = N-acetyl-L-glutamate + L-ornithine</text>
        <dbReference type="Rhea" id="RHEA:15349"/>
        <dbReference type="ChEBI" id="CHEBI:29985"/>
        <dbReference type="ChEBI" id="CHEBI:44337"/>
        <dbReference type="ChEBI" id="CHEBI:46911"/>
        <dbReference type="ChEBI" id="CHEBI:57805"/>
        <dbReference type="EC" id="2.3.1.35"/>
    </reaction>
</comment>
<comment type="catalytic activity">
    <reaction evidence="1">
        <text>L-glutamate + acetyl-CoA = N-acetyl-L-glutamate + CoA + H(+)</text>
        <dbReference type="Rhea" id="RHEA:24292"/>
        <dbReference type="ChEBI" id="CHEBI:15378"/>
        <dbReference type="ChEBI" id="CHEBI:29985"/>
        <dbReference type="ChEBI" id="CHEBI:44337"/>
        <dbReference type="ChEBI" id="CHEBI:57287"/>
        <dbReference type="ChEBI" id="CHEBI:57288"/>
        <dbReference type="EC" id="2.3.1.1"/>
    </reaction>
</comment>
<comment type="pathway">
    <text evidence="1">Amino-acid biosynthesis; L-arginine biosynthesis; L-ornithine and N-acetyl-L-glutamate from L-glutamate and N(2)-acetyl-L-ornithine (cyclic): step 1/1.</text>
</comment>
<comment type="pathway">
    <text evidence="1">Amino-acid biosynthesis; L-arginine biosynthesis; N(2)-acetyl-L-ornithine from L-glutamate: step 1/4.</text>
</comment>
<comment type="subunit">
    <text evidence="1">Heterotetramer of two alpha and two beta chains.</text>
</comment>
<comment type="subcellular location">
    <subcellularLocation>
        <location evidence="1">Cytoplasm</location>
    </subcellularLocation>
</comment>
<comment type="similarity">
    <text evidence="1">Belongs to the ArgJ family.</text>
</comment>